<reference key="1">
    <citation type="submission" date="2007-03" db="EMBL/GenBank/DDBJ databases">
        <title>Complete sequence of chromosome of Methanococcus maripaludis C5.</title>
        <authorList>
            <consortium name="US DOE Joint Genome Institute"/>
            <person name="Copeland A."/>
            <person name="Lucas S."/>
            <person name="Lapidus A."/>
            <person name="Barry K."/>
            <person name="Glavina del Rio T."/>
            <person name="Dalin E."/>
            <person name="Tice H."/>
            <person name="Pitluck S."/>
            <person name="Chertkov O."/>
            <person name="Brettin T."/>
            <person name="Bruce D."/>
            <person name="Han C."/>
            <person name="Detter J.C."/>
            <person name="Schmutz J."/>
            <person name="Larimer F."/>
            <person name="Land M."/>
            <person name="Hauser L."/>
            <person name="Kyrpides N."/>
            <person name="Mikhailova N."/>
            <person name="Sieprawska-Lupa M."/>
            <person name="Whitman W.B."/>
            <person name="Richardson P."/>
        </authorList>
    </citation>
    <scope>NUCLEOTIDE SEQUENCE [LARGE SCALE GENOMIC DNA]</scope>
    <source>
        <strain>C5 / ATCC BAA-1333</strain>
    </source>
</reference>
<gene>
    <name evidence="1" type="primary">pyrB</name>
    <name type="ordered locus">MmarC5_1750</name>
</gene>
<organism>
    <name type="scientific">Methanococcus maripaludis (strain C5 / ATCC BAA-1333)</name>
    <dbReference type="NCBI Taxonomy" id="402880"/>
    <lineage>
        <taxon>Archaea</taxon>
        <taxon>Methanobacteriati</taxon>
        <taxon>Methanobacteriota</taxon>
        <taxon>Methanomada group</taxon>
        <taxon>Methanococci</taxon>
        <taxon>Methanococcales</taxon>
        <taxon>Methanococcaceae</taxon>
        <taxon>Methanococcus</taxon>
    </lineage>
</organism>
<feature type="chain" id="PRO_1000000014" description="Aspartate carbamoyltransferase catalytic subunit">
    <location>
        <begin position="1"/>
        <end position="302"/>
    </location>
</feature>
<feature type="binding site" evidence="1">
    <location>
        <position position="53"/>
    </location>
    <ligand>
        <name>carbamoyl phosphate</name>
        <dbReference type="ChEBI" id="CHEBI:58228"/>
    </ligand>
</feature>
<feature type="binding site" evidence="1">
    <location>
        <position position="54"/>
    </location>
    <ligand>
        <name>carbamoyl phosphate</name>
        <dbReference type="ChEBI" id="CHEBI:58228"/>
    </ligand>
</feature>
<feature type="binding site" evidence="1">
    <location>
        <position position="82"/>
    </location>
    <ligand>
        <name>L-aspartate</name>
        <dbReference type="ChEBI" id="CHEBI:29991"/>
    </ligand>
</feature>
<feature type="binding site" evidence="1">
    <location>
        <position position="103"/>
    </location>
    <ligand>
        <name>carbamoyl phosphate</name>
        <dbReference type="ChEBI" id="CHEBI:58228"/>
    </ligand>
</feature>
<feature type="binding site" evidence="1">
    <location>
        <position position="131"/>
    </location>
    <ligand>
        <name>carbamoyl phosphate</name>
        <dbReference type="ChEBI" id="CHEBI:58228"/>
    </ligand>
</feature>
<feature type="binding site" evidence="1">
    <location>
        <position position="134"/>
    </location>
    <ligand>
        <name>carbamoyl phosphate</name>
        <dbReference type="ChEBI" id="CHEBI:58228"/>
    </ligand>
</feature>
<feature type="binding site" evidence="1">
    <location>
        <position position="164"/>
    </location>
    <ligand>
        <name>L-aspartate</name>
        <dbReference type="ChEBI" id="CHEBI:29991"/>
    </ligand>
</feature>
<feature type="binding site" evidence="1">
    <location>
        <position position="223"/>
    </location>
    <ligand>
        <name>L-aspartate</name>
        <dbReference type="ChEBI" id="CHEBI:29991"/>
    </ligand>
</feature>
<feature type="binding site" evidence="1">
    <location>
        <position position="260"/>
    </location>
    <ligand>
        <name>carbamoyl phosphate</name>
        <dbReference type="ChEBI" id="CHEBI:58228"/>
    </ligand>
</feature>
<feature type="binding site" evidence="1">
    <location>
        <position position="261"/>
    </location>
    <ligand>
        <name>carbamoyl phosphate</name>
        <dbReference type="ChEBI" id="CHEBI:58228"/>
    </ligand>
</feature>
<name>PYRB_METM5</name>
<keyword id="KW-0665">Pyrimidine biosynthesis</keyword>
<keyword id="KW-0808">Transferase</keyword>
<protein>
    <recommendedName>
        <fullName evidence="1">Aspartate carbamoyltransferase catalytic subunit</fullName>
        <ecNumber evidence="1">2.1.3.2</ecNumber>
    </recommendedName>
    <alternativeName>
        <fullName evidence="1">Aspartate transcarbamylase</fullName>
        <shortName evidence="1">ATCase</shortName>
    </alternativeName>
</protein>
<evidence type="ECO:0000255" key="1">
    <source>
        <dbReference type="HAMAP-Rule" id="MF_00001"/>
    </source>
</evidence>
<accession>A4G0R3</accession>
<comment type="function">
    <text evidence="1">Catalyzes the condensation of carbamoyl phosphate and aspartate to form carbamoyl aspartate and inorganic phosphate, the committed step in the de novo pyrimidine nucleotide biosynthesis pathway.</text>
</comment>
<comment type="catalytic activity">
    <reaction evidence="1">
        <text>carbamoyl phosphate + L-aspartate = N-carbamoyl-L-aspartate + phosphate + H(+)</text>
        <dbReference type="Rhea" id="RHEA:20013"/>
        <dbReference type="ChEBI" id="CHEBI:15378"/>
        <dbReference type="ChEBI" id="CHEBI:29991"/>
        <dbReference type="ChEBI" id="CHEBI:32814"/>
        <dbReference type="ChEBI" id="CHEBI:43474"/>
        <dbReference type="ChEBI" id="CHEBI:58228"/>
        <dbReference type="EC" id="2.1.3.2"/>
    </reaction>
</comment>
<comment type="pathway">
    <text evidence="1">Pyrimidine metabolism; UMP biosynthesis via de novo pathway; (S)-dihydroorotate from bicarbonate: step 2/3.</text>
</comment>
<comment type="subunit">
    <text evidence="1">Heterooligomer of catalytic and regulatory chains.</text>
</comment>
<comment type="similarity">
    <text evidence="1">Belongs to the aspartate/ornithine carbamoyltransferase superfamily. ATCase family.</text>
</comment>
<proteinExistence type="inferred from homology"/>
<sequence>MRHLISMRDIGREEILNILDESERMEAILNEKGHCDFLNGRILATLFYEPSTRTRLSFETAMKRLGGNVIGFTDISNTSVTKGESLADTIKVISGYSDLIAIRHPSEGAARLSGENSKVPVINAGDGSNQHPTQTLLDLYTIKREVGHIENLKIAFIGDLKYGRTVHSLCQALSLFKGVEIKLISPEELKMPREVIEDIDGKIKLSEMTDVEIEDVDVVYMTRIQKERFVDVNEYYKVKGIYRLSKEHIGDKDVVIMHPLPRVDEIDSEVDNLPQARYFKQSFYGVPVRMAILKLLFEDSVK</sequence>
<dbReference type="EC" id="2.1.3.2" evidence="1"/>
<dbReference type="EMBL" id="CP000609">
    <property type="protein sequence ID" value="ABO36047.1"/>
    <property type="molecule type" value="Genomic_DNA"/>
</dbReference>
<dbReference type="RefSeq" id="WP_011869493.1">
    <property type="nucleotide sequence ID" value="NC_009135.1"/>
</dbReference>
<dbReference type="SMR" id="A4G0R3"/>
<dbReference type="STRING" id="402880.MmarC5_1750"/>
<dbReference type="GeneID" id="4927985"/>
<dbReference type="KEGG" id="mmq:MmarC5_1750"/>
<dbReference type="eggNOG" id="arCOG00911">
    <property type="taxonomic scope" value="Archaea"/>
</dbReference>
<dbReference type="HOGENOM" id="CLU_043846_1_2_2"/>
<dbReference type="OrthoDB" id="7792at2157"/>
<dbReference type="UniPathway" id="UPA00070">
    <property type="reaction ID" value="UER00116"/>
</dbReference>
<dbReference type="Proteomes" id="UP000000253">
    <property type="component" value="Chromosome"/>
</dbReference>
<dbReference type="GO" id="GO:0016597">
    <property type="term" value="F:amino acid binding"/>
    <property type="evidence" value="ECO:0007669"/>
    <property type="project" value="InterPro"/>
</dbReference>
<dbReference type="GO" id="GO:0004070">
    <property type="term" value="F:aspartate carbamoyltransferase activity"/>
    <property type="evidence" value="ECO:0007669"/>
    <property type="project" value="UniProtKB-UniRule"/>
</dbReference>
<dbReference type="GO" id="GO:0006207">
    <property type="term" value="P:'de novo' pyrimidine nucleobase biosynthetic process"/>
    <property type="evidence" value="ECO:0007669"/>
    <property type="project" value="InterPro"/>
</dbReference>
<dbReference type="GO" id="GO:0044205">
    <property type="term" value="P:'de novo' UMP biosynthetic process"/>
    <property type="evidence" value="ECO:0007669"/>
    <property type="project" value="UniProtKB-UniRule"/>
</dbReference>
<dbReference type="GO" id="GO:0006520">
    <property type="term" value="P:amino acid metabolic process"/>
    <property type="evidence" value="ECO:0007669"/>
    <property type="project" value="InterPro"/>
</dbReference>
<dbReference type="FunFam" id="3.40.50.1370:FF:000001">
    <property type="entry name" value="Aspartate carbamoyltransferase"/>
    <property type="match status" value="1"/>
</dbReference>
<dbReference type="FunFam" id="3.40.50.1370:FF:000002">
    <property type="entry name" value="Aspartate carbamoyltransferase 2"/>
    <property type="match status" value="1"/>
</dbReference>
<dbReference type="Gene3D" id="3.40.50.1370">
    <property type="entry name" value="Aspartate/ornithine carbamoyltransferase"/>
    <property type="match status" value="2"/>
</dbReference>
<dbReference type="HAMAP" id="MF_00001">
    <property type="entry name" value="Asp_carb_tr"/>
    <property type="match status" value="1"/>
</dbReference>
<dbReference type="InterPro" id="IPR006132">
    <property type="entry name" value="Asp/Orn_carbamoyltranf_P-bd"/>
</dbReference>
<dbReference type="InterPro" id="IPR006130">
    <property type="entry name" value="Asp/Orn_carbamoylTrfase"/>
</dbReference>
<dbReference type="InterPro" id="IPR036901">
    <property type="entry name" value="Asp/Orn_carbamoylTrfase_sf"/>
</dbReference>
<dbReference type="InterPro" id="IPR002082">
    <property type="entry name" value="Asp_carbamoyltransf"/>
</dbReference>
<dbReference type="InterPro" id="IPR006131">
    <property type="entry name" value="Asp_carbamoyltransf_Asp/Orn-bd"/>
</dbReference>
<dbReference type="NCBIfam" id="TIGR00670">
    <property type="entry name" value="asp_carb_tr"/>
    <property type="match status" value="1"/>
</dbReference>
<dbReference type="NCBIfam" id="NF002032">
    <property type="entry name" value="PRK00856.1"/>
    <property type="match status" value="1"/>
</dbReference>
<dbReference type="PANTHER" id="PTHR45753:SF6">
    <property type="entry name" value="ASPARTATE CARBAMOYLTRANSFERASE"/>
    <property type="match status" value="1"/>
</dbReference>
<dbReference type="PANTHER" id="PTHR45753">
    <property type="entry name" value="ORNITHINE CARBAMOYLTRANSFERASE, MITOCHONDRIAL"/>
    <property type="match status" value="1"/>
</dbReference>
<dbReference type="Pfam" id="PF00185">
    <property type="entry name" value="OTCace"/>
    <property type="match status" value="1"/>
</dbReference>
<dbReference type="Pfam" id="PF02729">
    <property type="entry name" value="OTCace_N"/>
    <property type="match status" value="1"/>
</dbReference>
<dbReference type="PRINTS" id="PR00100">
    <property type="entry name" value="AOTCASE"/>
</dbReference>
<dbReference type="PRINTS" id="PR00101">
    <property type="entry name" value="ATCASE"/>
</dbReference>
<dbReference type="SUPFAM" id="SSF53671">
    <property type="entry name" value="Aspartate/ornithine carbamoyltransferase"/>
    <property type="match status" value="1"/>
</dbReference>
<dbReference type="PROSITE" id="PS00097">
    <property type="entry name" value="CARBAMOYLTRANSFERASE"/>
    <property type="match status" value="1"/>
</dbReference>